<comment type="function">
    <text evidence="1">Catalyzes the hydrolysis of N(2)-succinylarginine into N(2)-succinylornithine, ammonia and CO(2).</text>
</comment>
<comment type="catalytic activity">
    <reaction evidence="1">
        <text>N(2)-succinyl-L-arginine + 2 H2O + 2 H(+) = N(2)-succinyl-L-ornithine + 2 NH4(+) + CO2</text>
        <dbReference type="Rhea" id="RHEA:19533"/>
        <dbReference type="ChEBI" id="CHEBI:15377"/>
        <dbReference type="ChEBI" id="CHEBI:15378"/>
        <dbReference type="ChEBI" id="CHEBI:16526"/>
        <dbReference type="ChEBI" id="CHEBI:28938"/>
        <dbReference type="ChEBI" id="CHEBI:58241"/>
        <dbReference type="ChEBI" id="CHEBI:58514"/>
        <dbReference type="EC" id="3.5.3.23"/>
    </reaction>
</comment>
<comment type="pathway">
    <text evidence="1">Amino-acid degradation; L-arginine degradation via AST pathway; L-glutamate and succinate from L-arginine: step 2/5.</text>
</comment>
<comment type="subunit">
    <text evidence="1">Homodimer.</text>
</comment>
<comment type="similarity">
    <text evidence="1">Belongs to the succinylarginine dihydrolase family.</text>
</comment>
<name>ASTB_SHEFN</name>
<dbReference type="EC" id="3.5.3.23" evidence="1"/>
<dbReference type="EMBL" id="CP000447">
    <property type="protein sequence ID" value="ABI72324.1"/>
    <property type="molecule type" value="Genomic_DNA"/>
</dbReference>
<dbReference type="RefSeq" id="WP_011637933.1">
    <property type="nucleotide sequence ID" value="NC_008345.1"/>
</dbReference>
<dbReference type="SMR" id="Q080J1"/>
<dbReference type="STRING" id="318167.Sfri_2479"/>
<dbReference type="KEGG" id="sfr:Sfri_2479"/>
<dbReference type="eggNOG" id="COG3724">
    <property type="taxonomic scope" value="Bacteria"/>
</dbReference>
<dbReference type="HOGENOM" id="CLU_053835_0_0_6"/>
<dbReference type="OrthoDB" id="248552at2"/>
<dbReference type="UniPathway" id="UPA00185">
    <property type="reaction ID" value="UER00280"/>
</dbReference>
<dbReference type="Proteomes" id="UP000000684">
    <property type="component" value="Chromosome"/>
</dbReference>
<dbReference type="GO" id="GO:0009015">
    <property type="term" value="F:N-succinylarginine dihydrolase activity"/>
    <property type="evidence" value="ECO:0007669"/>
    <property type="project" value="UniProtKB-UniRule"/>
</dbReference>
<dbReference type="GO" id="GO:0019544">
    <property type="term" value="P:arginine catabolic process to glutamate"/>
    <property type="evidence" value="ECO:0007669"/>
    <property type="project" value="UniProtKB-UniRule"/>
</dbReference>
<dbReference type="GO" id="GO:0019545">
    <property type="term" value="P:arginine catabolic process to succinate"/>
    <property type="evidence" value="ECO:0007669"/>
    <property type="project" value="UniProtKB-UniRule"/>
</dbReference>
<dbReference type="Gene3D" id="3.75.10.20">
    <property type="entry name" value="Succinylarginine dihydrolase"/>
    <property type="match status" value="1"/>
</dbReference>
<dbReference type="HAMAP" id="MF_01172">
    <property type="entry name" value="AstB"/>
    <property type="match status" value="1"/>
</dbReference>
<dbReference type="InterPro" id="IPR037031">
    <property type="entry name" value="AstB_sf"/>
</dbReference>
<dbReference type="InterPro" id="IPR007079">
    <property type="entry name" value="SuccinylArg_d-Hdrlase_AstB"/>
</dbReference>
<dbReference type="NCBIfam" id="TIGR03241">
    <property type="entry name" value="arg_catab_astB"/>
    <property type="match status" value="1"/>
</dbReference>
<dbReference type="NCBIfam" id="NF009789">
    <property type="entry name" value="PRK13281.1"/>
    <property type="match status" value="1"/>
</dbReference>
<dbReference type="PANTHER" id="PTHR30420">
    <property type="entry name" value="N-SUCCINYLARGININE DIHYDROLASE"/>
    <property type="match status" value="1"/>
</dbReference>
<dbReference type="PANTHER" id="PTHR30420:SF2">
    <property type="entry name" value="N-SUCCINYLARGININE DIHYDROLASE"/>
    <property type="match status" value="1"/>
</dbReference>
<dbReference type="Pfam" id="PF04996">
    <property type="entry name" value="AstB"/>
    <property type="match status" value="1"/>
</dbReference>
<dbReference type="SUPFAM" id="SSF55909">
    <property type="entry name" value="Pentein"/>
    <property type="match status" value="1"/>
</dbReference>
<organism>
    <name type="scientific">Shewanella frigidimarina (strain NCIMB 400)</name>
    <dbReference type="NCBI Taxonomy" id="318167"/>
    <lineage>
        <taxon>Bacteria</taxon>
        <taxon>Pseudomonadati</taxon>
        <taxon>Pseudomonadota</taxon>
        <taxon>Gammaproteobacteria</taxon>
        <taxon>Alteromonadales</taxon>
        <taxon>Shewanellaceae</taxon>
        <taxon>Shewanella</taxon>
    </lineage>
</organism>
<protein>
    <recommendedName>
        <fullName evidence="1">N-succinylarginine dihydrolase</fullName>
        <ecNumber evidence="1">3.5.3.23</ecNumber>
    </recommendedName>
</protein>
<reference key="1">
    <citation type="submission" date="2006-08" db="EMBL/GenBank/DDBJ databases">
        <title>Complete sequence of Shewanella frigidimarina NCIMB 400.</title>
        <authorList>
            <consortium name="US DOE Joint Genome Institute"/>
            <person name="Copeland A."/>
            <person name="Lucas S."/>
            <person name="Lapidus A."/>
            <person name="Barry K."/>
            <person name="Detter J.C."/>
            <person name="Glavina del Rio T."/>
            <person name="Hammon N."/>
            <person name="Israni S."/>
            <person name="Dalin E."/>
            <person name="Tice H."/>
            <person name="Pitluck S."/>
            <person name="Fredrickson J.K."/>
            <person name="Kolker E."/>
            <person name="McCuel L.A."/>
            <person name="DiChristina T."/>
            <person name="Nealson K.H."/>
            <person name="Newman D."/>
            <person name="Tiedje J.M."/>
            <person name="Zhou J."/>
            <person name="Romine M.F."/>
            <person name="Culley D.E."/>
            <person name="Serres M."/>
            <person name="Chertkov O."/>
            <person name="Brettin T."/>
            <person name="Bruce D."/>
            <person name="Han C."/>
            <person name="Tapia R."/>
            <person name="Gilna P."/>
            <person name="Schmutz J."/>
            <person name="Larimer F."/>
            <person name="Land M."/>
            <person name="Hauser L."/>
            <person name="Kyrpides N."/>
            <person name="Mikhailova N."/>
            <person name="Richardson P."/>
        </authorList>
    </citation>
    <scope>NUCLEOTIDE SEQUENCE [LARGE SCALE GENOMIC DNA]</scope>
    <source>
        <strain>NCIMB 400</strain>
    </source>
</reference>
<evidence type="ECO:0000255" key="1">
    <source>
        <dbReference type="HAMAP-Rule" id="MF_01172"/>
    </source>
</evidence>
<keyword id="KW-0056">Arginine metabolism</keyword>
<keyword id="KW-0378">Hydrolase</keyword>
<keyword id="KW-1185">Reference proteome</keyword>
<gene>
    <name evidence="1" type="primary">astB</name>
    <name type="ordered locus">Sfri_2479</name>
</gene>
<proteinExistence type="inferred from homology"/>
<feature type="chain" id="PRO_0000262375" description="N-succinylarginine dihydrolase">
    <location>
        <begin position="1"/>
        <end position="444"/>
    </location>
</feature>
<feature type="active site" evidence="1">
    <location>
        <position position="174"/>
    </location>
</feature>
<feature type="active site" evidence="1">
    <location>
        <position position="250"/>
    </location>
</feature>
<feature type="active site" description="Nucleophile" evidence="1">
    <location>
        <position position="368"/>
    </location>
</feature>
<feature type="binding site" evidence="1">
    <location>
        <begin position="19"/>
        <end position="28"/>
    </location>
    <ligand>
        <name>substrate</name>
    </ligand>
</feature>
<feature type="binding site" evidence="1">
    <location>
        <position position="110"/>
    </location>
    <ligand>
        <name>substrate</name>
    </ligand>
</feature>
<feature type="binding site" evidence="1">
    <location>
        <begin position="137"/>
        <end position="138"/>
    </location>
    <ligand>
        <name>substrate</name>
    </ligand>
</feature>
<feature type="binding site" evidence="1">
    <location>
        <position position="214"/>
    </location>
    <ligand>
        <name>substrate</name>
    </ligand>
</feature>
<feature type="binding site" evidence="1">
    <location>
        <position position="252"/>
    </location>
    <ligand>
        <name>substrate</name>
    </ligand>
</feature>
<feature type="binding site" evidence="1">
    <location>
        <position position="362"/>
    </location>
    <ligand>
        <name>substrate</name>
    </ligand>
</feature>
<accession>Q080J1</accession>
<sequence>MKHFEANFDGLVGPTHNYAGLSFGNVASFSNAAQTSNPKAAAKQGLQKAKSLADLGMVQGVLAPQERPDLYTLRRIGFSGSDAEVLQKAAQQAPALLNACCSASSMWTANAATVSPSADTRDGKVHFTPANLVDKLHRSIEPVTTGNILQATFNNDRYFKHHQHLPEHASFGDEGAANHTRLCSEYGHAGVELFVYGQTATNPDAPKPTKYPARQTLEASQAVARLHQLEDESCVFMQQNPNVIDQGVFHNDVISVGNKNVLFYHEQAFLDTETKFDEIRRKMNSDMYFVKVTTEQVSIDDAVRSYLFNTQIITLPSGEMAIIAPTNCQENPAVFAYLNELVTLGTPIKQVRYYDVKQSMQNGGGPACLRLRVAMNEQEVAAVNQNTLMDDGLFTRLNTWVDRHYRDQLTVSDLADPQLIIESRTALDELTQILKLGSVYLFQR</sequence>